<keyword id="KW-0002">3D-structure</keyword>
<keyword id="KW-0024">Alternative initiation</keyword>
<keyword id="KW-0067">ATP-binding</keyword>
<keyword id="KW-1003">Cell membrane</keyword>
<keyword id="KW-0963">Cytoplasm</keyword>
<keyword id="KW-0418">Kinase</keyword>
<keyword id="KW-0472">Membrane</keyword>
<keyword id="KW-0511">Multifunctional enzyme</keyword>
<keyword id="KW-0520">NAD</keyword>
<keyword id="KW-0547">Nucleotide-binding</keyword>
<keyword id="KW-0662">Pyridine nucleotide biosynthesis</keyword>
<keyword id="KW-1185">Reference proteome</keyword>
<keyword id="KW-0808">Transferase</keyword>
<reference key="1">
    <citation type="journal article" date="1995" name="Science">
        <title>Whole-genome random sequencing and assembly of Haemophilus influenzae Rd.</title>
        <authorList>
            <person name="Fleischmann R.D."/>
            <person name="Adams M.D."/>
            <person name="White O."/>
            <person name="Clayton R.A."/>
            <person name="Kirkness E.F."/>
            <person name="Kerlavage A.R."/>
            <person name="Bult C.J."/>
            <person name="Tomb J.-F."/>
            <person name="Dougherty B.A."/>
            <person name="Merrick J.M."/>
            <person name="McKenney K."/>
            <person name="Sutton G.G."/>
            <person name="FitzHugh W."/>
            <person name="Fields C.A."/>
            <person name="Gocayne J.D."/>
            <person name="Scott J.D."/>
            <person name="Shirley R."/>
            <person name="Liu L.-I."/>
            <person name="Glodek A."/>
            <person name="Kelley J.M."/>
            <person name="Weidman J.F."/>
            <person name="Phillips C.A."/>
            <person name="Spriggs T."/>
            <person name="Hedblom E."/>
            <person name="Cotton M.D."/>
            <person name="Utterback T.R."/>
            <person name="Hanna M.C."/>
            <person name="Nguyen D.T."/>
            <person name="Saudek D.M."/>
            <person name="Brandon R.C."/>
            <person name="Fine L.D."/>
            <person name="Fritchman J.L."/>
            <person name="Fuhrmann J.L."/>
            <person name="Geoghagen N.S.M."/>
            <person name="Gnehm C.L."/>
            <person name="McDonald L.A."/>
            <person name="Small K.V."/>
            <person name="Fraser C.M."/>
            <person name="Smith H.O."/>
            <person name="Venter J.C."/>
        </authorList>
    </citation>
    <scope>NUCLEOTIDE SEQUENCE [LARGE SCALE GENOMIC DNA]</scope>
    <source>
        <strain>ATCC 51907 / DSM 11121 / KW20 / Rd</strain>
    </source>
</reference>
<reference key="2">
    <citation type="journal article" date="2002" name="J. Bacteriol.">
        <title>Ribosylnicotinamide kinase domain of NadR protein: identification and implications in NAD biosynthesis.</title>
        <authorList>
            <person name="Kurnasov O.V."/>
            <person name="Polanuyer B.M."/>
            <person name="Ananta S."/>
            <person name="Sloutsky R."/>
            <person name="Tam A."/>
            <person name="Gerdes S.Y."/>
            <person name="Osterman A.L."/>
        </authorList>
    </citation>
    <scope>FUNCTION</scope>
    <scope>CATALYTIC ACTIVITY</scope>
    <scope>ALTERNATIVE INITIATION</scope>
    <scope>BIOPHYSICOCHEMICAL PROPERTIES</scope>
    <source>
        <strain>ATCC 51907 / DSM 11121 / KW20 / Rd</strain>
    </source>
</reference>
<reference key="3">
    <citation type="journal article" date="2005" name="J. Bacteriol.">
        <title>Coupling of NAD+ biosynthesis and nicotinamide ribosyl transport: characterization of NadR ribonucleotide kinase mutants of Haemophilus influenzae.</title>
        <authorList>
            <person name="Merdanovic M."/>
            <person name="Sauer E."/>
            <person name="Reidl J."/>
        </authorList>
    </citation>
    <scope>MUTAGENESIS OF LYS-126; GLY-238; TRP-256; TYR-292; ASP-304 AND ARG-352</scope>
    <scope>SUBCELLULAR LOCATION</scope>
    <source>
        <strain>ATCC 51907 / DSM 11121 / KW20 / Rd</strain>
    </source>
</reference>
<reference key="4">
    <citation type="journal article" date="2002" name="J. Biol. Chem.">
        <title>Crystal structure of Haemophilus influenzae NadR protein. A bifunctional enzyme endowed with NMN adenyltransferase and ribosylnicotinimide kinase activities.</title>
        <authorList>
            <person name="Singh S.K."/>
            <person name="Kurnasov O.V."/>
            <person name="Chen B."/>
            <person name="Robinson H."/>
            <person name="Grishin N.V."/>
            <person name="Osterman A.L."/>
            <person name="Zhang H."/>
        </authorList>
    </citation>
    <scope>X-RAY CRYSTALLOGRAPHY (2.9 ANGSTROMS) OF 57-421 IN COMPLEX WITH NAD</scope>
    <scope>SUBUNIT</scope>
</reference>
<proteinExistence type="evidence at protein level"/>
<comment type="function">
    <text evidence="2">This enzyme has two activities: nicotinamide mononucleotide (NMN) adenylyltransferase and ribosylnicotinamide (RN) kinase. The RN kinase activity catalyzes the phosphorylation of RN to form nicotinamide ribonucleotide. The NMN adenylyltransferase activity catalyzes the transfer of the AMP moiety of ATP to nicotinamide ribonucleotide to form NAD(+).</text>
</comment>
<comment type="catalytic activity">
    <reaction evidence="2">
        <text>beta-nicotinamide D-ribonucleotide + ATP + H(+) = diphosphate + NAD(+)</text>
        <dbReference type="Rhea" id="RHEA:21360"/>
        <dbReference type="ChEBI" id="CHEBI:14649"/>
        <dbReference type="ChEBI" id="CHEBI:15378"/>
        <dbReference type="ChEBI" id="CHEBI:30616"/>
        <dbReference type="ChEBI" id="CHEBI:33019"/>
        <dbReference type="ChEBI" id="CHEBI:57540"/>
        <dbReference type="EC" id="2.7.7.1"/>
    </reaction>
</comment>
<comment type="catalytic activity">
    <reaction evidence="2">
        <text>beta-nicotinamide D-riboside + ATP = beta-nicotinamide D-ribonucleotide + ADP + H(+)</text>
        <dbReference type="Rhea" id="RHEA:14017"/>
        <dbReference type="ChEBI" id="CHEBI:14649"/>
        <dbReference type="ChEBI" id="CHEBI:15378"/>
        <dbReference type="ChEBI" id="CHEBI:15927"/>
        <dbReference type="ChEBI" id="CHEBI:30616"/>
        <dbReference type="ChEBI" id="CHEBI:456216"/>
        <dbReference type="EC" id="2.7.1.22"/>
    </reaction>
</comment>
<comment type="activity regulation">
    <text>Feed-back regulated by NAD. At high levels of NAD the RN kinase activity is inhibited.</text>
</comment>
<comment type="biophysicochemical properties">
    <kinetics>
        <KM evidence="2">0.14 mM for NMN</KM>
    </kinetics>
</comment>
<comment type="pathway">
    <text>Cofactor biosynthesis; NAD(+) biosynthesis [regulation].</text>
</comment>
<comment type="pathway">
    <text>Cofactor biosynthesis; NAD(+) biosynthesis; NAD(+) from nicotinamide D-ribonucleotide: step 1/1.</text>
</comment>
<comment type="subunit">
    <text evidence="1">Homotetramer.</text>
</comment>
<comment type="subcellular location">
    <subcellularLocation>
        <location evidence="3">Cell membrane</location>
        <topology evidence="3">Peripheral membrane protein</topology>
    </subcellularLocation>
    <subcellularLocation>
        <location evidence="3">Cytoplasm</location>
    </subcellularLocation>
    <text>Found as a soluble cytoplasmic protein as well as a membrane-associated protein. In combination with corepressor (NAD), the cytoplasmic form of NadR would be capable of acting as a transcriptional repressor.</text>
</comment>
<comment type="alternative products">
    <event type="alternative initiation"/>
    <isoform>
        <id>P44308-1</id>
        <name>Long</name>
        <sequence type="displayed"/>
    </isoform>
    <isoform>
        <id>P44308-2</id>
        <name>Short</name>
        <sequence type="described" ref="VSP_040071"/>
    </isoform>
</comment>
<comment type="miscellaneous">
    <molecule>Isoform Short</molecule>
    <text evidence="4">Shows the same catalytic activity as isoform Long.</text>
</comment>
<comment type="similarity">
    <text evidence="4">In the N-terminal section; belongs to the bacterial NMN adenylyltransferase family.</text>
</comment>
<comment type="similarity">
    <text evidence="4">In the C-terminal section; belongs to the bacterial RNK family.</text>
</comment>
<sequence>MGFTTGREFHPALRMRAKYNAKYLGTKSEREKYFHLAYNKHTQFLRYQEQIMSKTKEKKVGVIFGKFYPVHTGHINMIYEAFSKVDELHVIVCSDTVRDLKLFYDSKMKRMPTVQDRLRWMQQIFKYQKNQIFIHHLVEDGIPSYPNGWQSWSEAVKTLFHEKHFEPSIVFSSEPQDKAPYEKYLGLEVSLVDPDRTFFNVSATKIRTTPFQYWKFIPKEARPFFAKTVAILGGESSGKSVLVNKLAAVFNTTSAWEYGREFVFEKLGGDEQAMQYSDYPQMALGHQRYIDYAVRHSHKIAFIDTDFITTQAFCIQYEGKAHPFLDSMIKEYPFDVTILLKNNTEWVDDGLRSLGSQKQRQQFQQLLKKLLDKYKVPYIEIESPSYLDRYNQVKAVIEKVLNEEEISELQNTTFPIKGTSQ</sequence>
<gene>
    <name type="primary">nadR</name>
    <name type="ordered locus">HI_0763</name>
</gene>
<accession>P44308</accession>
<evidence type="ECO:0000269" key="1">
    <source>
    </source>
</evidence>
<evidence type="ECO:0000269" key="2">
    <source>
    </source>
</evidence>
<evidence type="ECO:0000269" key="3">
    <source>
    </source>
</evidence>
<evidence type="ECO:0000305" key="4"/>
<evidence type="ECO:0007829" key="5">
    <source>
        <dbReference type="PDB" id="1LW7"/>
    </source>
</evidence>
<dbReference type="EC" id="2.7.7.1"/>
<dbReference type="EC" id="2.7.1.22"/>
<dbReference type="EMBL" id="L42023">
    <property type="protein sequence ID" value="AAC22421.1"/>
    <property type="molecule type" value="Genomic_DNA"/>
</dbReference>
<dbReference type="PIR" id="D64091">
    <property type="entry name" value="D64091"/>
</dbReference>
<dbReference type="RefSeq" id="NP_438922.1">
    <property type="nucleotide sequence ID" value="NC_000907.1"/>
</dbReference>
<dbReference type="PDB" id="1LW7">
    <property type="method" value="X-ray"/>
    <property type="resolution" value="2.90 A"/>
    <property type="chains" value="A=57-421"/>
</dbReference>
<dbReference type="PDBsum" id="1LW7"/>
<dbReference type="SMR" id="P44308"/>
<dbReference type="STRING" id="71421.HI_0763"/>
<dbReference type="TCDB" id="4.B.1.1.2">
    <property type="family name" value="the nicotinamide ribonucleoside (nr) uptake permease (pnuc) family"/>
</dbReference>
<dbReference type="EnsemblBacteria" id="AAC22421">
    <property type="protein sequence ID" value="AAC22421"/>
    <property type="gene ID" value="HI_0763"/>
</dbReference>
<dbReference type="KEGG" id="hin:HI_0763"/>
<dbReference type="PATRIC" id="fig|71421.8.peg.802"/>
<dbReference type="eggNOG" id="COG3172">
    <property type="taxonomic scope" value="Bacteria"/>
</dbReference>
<dbReference type="HOGENOM" id="CLU_052648_0_1_6"/>
<dbReference type="OrthoDB" id="3249147at2"/>
<dbReference type="PhylomeDB" id="P44308"/>
<dbReference type="BioCyc" id="HINF71421:G1GJ1-803-MONOMER"/>
<dbReference type="BioCyc" id="MetaCyc:MONOMER-8322"/>
<dbReference type="SABIO-RK" id="P44308"/>
<dbReference type="UniPathway" id="UPA00253"/>
<dbReference type="UniPathway" id="UPA00253">
    <property type="reaction ID" value="UER00600"/>
</dbReference>
<dbReference type="EvolutionaryTrace" id="P44308"/>
<dbReference type="Proteomes" id="UP000000579">
    <property type="component" value="Chromosome"/>
</dbReference>
<dbReference type="GO" id="GO:0005737">
    <property type="term" value="C:cytoplasm"/>
    <property type="evidence" value="ECO:0007669"/>
    <property type="project" value="UniProtKB-SubCell"/>
</dbReference>
<dbReference type="GO" id="GO:0005886">
    <property type="term" value="C:plasma membrane"/>
    <property type="evidence" value="ECO:0007669"/>
    <property type="project" value="UniProtKB-SubCell"/>
</dbReference>
<dbReference type="GO" id="GO:0005524">
    <property type="term" value="F:ATP binding"/>
    <property type="evidence" value="ECO:0007669"/>
    <property type="project" value="UniProtKB-KW"/>
</dbReference>
<dbReference type="GO" id="GO:0000309">
    <property type="term" value="F:nicotinamide-nucleotide adenylyltransferase activity"/>
    <property type="evidence" value="ECO:0000318"/>
    <property type="project" value="GO_Central"/>
</dbReference>
<dbReference type="GO" id="GO:0050262">
    <property type="term" value="F:ribosylnicotinamide kinase activity"/>
    <property type="evidence" value="ECO:0007669"/>
    <property type="project" value="UniProtKB-EC"/>
</dbReference>
<dbReference type="GO" id="GO:0009435">
    <property type="term" value="P:NAD biosynthetic process"/>
    <property type="evidence" value="ECO:0007669"/>
    <property type="project" value="UniProtKB-UniPathway"/>
</dbReference>
<dbReference type="CDD" id="cd02167">
    <property type="entry name" value="NMNAT_NadR"/>
    <property type="match status" value="1"/>
</dbReference>
<dbReference type="Gene3D" id="3.40.50.620">
    <property type="entry name" value="HUPs"/>
    <property type="match status" value="1"/>
</dbReference>
<dbReference type="Gene3D" id="3.40.50.300">
    <property type="entry name" value="P-loop containing nucleotide triphosphate hydrolases"/>
    <property type="match status" value="1"/>
</dbReference>
<dbReference type="InterPro" id="IPR004821">
    <property type="entry name" value="Cyt_trans-like"/>
</dbReference>
<dbReference type="InterPro" id="IPR052735">
    <property type="entry name" value="NAD_biosynth-regulator"/>
</dbReference>
<dbReference type="InterPro" id="IPR016429">
    <property type="entry name" value="NAD_NadR"/>
</dbReference>
<dbReference type="InterPro" id="IPR038727">
    <property type="entry name" value="NadR/Ttd14_AAA_dom"/>
</dbReference>
<dbReference type="InterPro" id="IPR006417">
    <property type="entry name" value="NadR_NMN_Atrans"/>
</dbReference>
<dbReference type="InterPro" id="IPR041749">
    <property type="entry name" value="NMNAT_NadR"/>
</dbReference>
<dbReference type="InterPro" id="IPR027417">
    <property type="entry name" value="P-loop_NTPase"/>
</dbReference>
<dbReference type="InterPro" id="IPR014729">
    <property type="entry name" value="Rossmann-like_a/b/a_fold"/>
</dbReference>
<dbReference type="NCBIfam" id="TIGR00125">
    <property type="entry name" value="cyt_tran_rel"/>
    <property type="match status" value="1"/>
</dbReference>
<dbReference type="NCBIfam" id="TIGR01526">
    <property type="entry name" value="nadR_NMN_Atrans"/>
    <property type="match status" value="1"/>
</dbReference>
<dbReference type="NCBIfam" id="NF005988">
    <property type="entry name" value="PRK08099.1"/>
    <property type="match status" value="1"/>
</dbReference>
<dbReference type="PANTHER" id="PTHR37512:SF1">
    <property type="entry name" value="NADR_TTD14 AAA DOMAIN-CONTAINING PROTEIN"/>
    <property type="match status" value="1"/>
</dbReference>
<dbReference type="PANTHER" id="PTHR37512">
    <property type="entry name" value="TRIFUNCTIONAL NAD BIOSYNTHESIS/REGULATOR PROTEIN NADR"/>
    <property type="match status" value="1"/>
</dbReference>
<dbReference type="Pfam" id="PF13521">
    <property type="entry name" value="AAA_28"/>
    <property type="match status" value="1"/>
</dbReference>
<dbReference type="Pfam" id="PF01467">
    <property type="entry name" value="CTP_transf_like"/>
    <property type="match status" value="1"/>
</dbReference>
<dbReference type="PIRSF" id="PIRSF004776">
    <property type="entry name" value="NadR_NMNAT/RNK"/>
    <property type="match status" value="1"/>
</dbReference>
<dbReference type="SUPFAM" id="SSF52374">
    <property type="entry name" value="Nucleotidylyl transferase"/>
    <property type="match status" value="1"/>
</dbReference>
<dbReference type="SUPFAM" id="SSF52540">
    <property type="entry name" value="P-loop containing nucleoside triphosphate hydrolases"/>
    <property type="match status" value="1"/>
</dbReference>
<protein>
    <recommendedName>
        <fullName>Bifunctional NAD biosynthesis protein NadR</fullName>
    </recommendedName>
    <domain>
        <recommendedName>
            <fullName>Nicotinamide mononucleotide adenylyltransferase</fullName>
            <shortName>NMN adenylyltransferase</shortName>
            <shortName>NMN-AT</shortName>
            <shortName>NMNAT</shortName>
            <ecNumber>2.7.7.1</ecNumber>
        </recommendedName>
        <alternativeName>
            <fullName>Nicotinamide ribonucleotide adenylyltransferase</fullName>
        </alternativeName>
        <alternativeName>
            <fullName>Nicotinamide-nucleotide adenylyltransferase</fullName>
        </alternativeName>
    </domain>
    <domain>
        <recommendedName>
            <fullName>Ribosylnicotinamide kinase</fullName>
            <shortName>RNK</shortName>
            <ecNumber>2.7.1.22</ecNumber>
        </recommendedName>
        <alternativeName>
            <fullName>Nicotinamide riboside kinase</fullName>
            <shortName>NRK</shortName>
            <shortName>NmR-K</shortName>
        </alternativeName>
    </domain>
</protein>
<name>NADR_HAEIN</name>
<feature type="chain" id="PRO_0000096689" description="Bifunctional NAD biosynthesis protein NadR">
    <location>
        <begin position="1"/>
        <end position="421"/>
    </location>
</feature>
<feature type="region of interest" description="Nicotinamide mononucleotide adenylyltransferase">
    <location>
        <begin position="57"/>
        <end position="224"/>
    </location>
</feature>
<feature type="region of interest" description="Ribosylnicotinamide kinase">
    <location>
        <begin position="225"/>
        <end position="421"/>
    </location>
</feature>
<feature type="binding site" evidence="1">
    <location>
        <begin position="64"/>
        <end position="67"/>
    </location>
    <ligand>
        <name>NAD(+)</name>
        <dbReference type="ChEBI" id="CHEBI:57540"/>
        <label>1</label>
    </ligand>
</feature>
<feature type="binding site" evidence="1">
    <location>
        <position position="71"/>
    </location>
    <ligand>
        <name>NAD(+)</name>
        <dbReference type="ChEBI" id="CHEBI:57540"/>
        <label>1</label>
    </ligand>
</feature>
<feature type="binding site" evidence="1">
    <location>
        <position position="98"/>
    </location>
    <ligand>
        <name>NAD(+)</name>
        <dbReference type="ChEBI" id="CHEBI:57540"/>
        <label>1</label>
    </ligand>
</feature>
<feature type="binding site" evidence="1">
    <location>
        <begin position="139"/>
        <end position="152"/>
    </location>
    <ligand>
        <name>NAD(+)</name>
        <dbReference type="ChEBI" id="CHEBI:57540"/>
        <label>1</label>
    </ligand>
</feature>
<feature type="binding site" evidence="1">
    <location>
        <begin position="172"/>
        <end position="174"/>
    </location>
    <ligand>
        <name>NAD(+)</name>
        <dbReference type="ChEBI" id="CHEBI:57540"/>
        <label>1</label>
    </ligand>
</feature>
<feature type="binding site" evidence="1">
    <location>
        <begin position="199"/>
        <end position="201"/>
    </location>
    <ligand>
        <name>NAD(+)</name>
        <dbReference type="ChEBI" id="CHEBI:57540"/>
        <label>1</label>
    </ligand>
</feature>
<feature type="binding site" evidence="1">
    <location>
        <begin position="254"/>
        <end position="256"/>
    </location>
    <ligand>
        <name>NAD(+)</name>
        <dbReference type="ChEBI" id="CHEBI:57540"/>
        <label>2</label>
    </ligand>
</feature>
<feature type="binding site" evidence="1">
    <location>
        <begin position="289"/>
        <end position="292"/>
    </location>
    <ligand>
        <name>NAD(+)</name>
        <dbReference type="ChEBI" id="CHEBI:57540"/>
        <label>2</label>
    </ligand>
</feature>
<feature type="splice variant" id="VSP_040071" description="In isoform Short." evidence="4">
    <location>
        <begin position="1"/>
        <end position="51"/>
    </location>
</feature>
<feature type="mutagenesis site" description="Significant reduction of RNK activity, also NMN adenylyltransferase activity is impaired." evidence="3">
    <original>K</original>
    <variation>A</variation>
    <variation>T</variation>
    <location>
        <position position="126"/>
    </location>
</feature>
<feature type="mutagenesis site" description="Complete loss of RNK activity, no effect on NMN adenylyltransferase activity." evidence="3">
    <original>G</original>
    <variation>N</variation>
    <variation>S</variation>
    <location>
        <position position="238"/>
    </location>
</feature>
<feature type="mutagenesis site" description="No effect on enzyme activities, but NAD feedback inhibition is almost lost." evidence="3">
    <original>W</original>
    <variation>F</variation>
    <location>
        <position position="256"/>
    </location>
</feature>
<feature type="mutagenesis site" description="Almost no effect." evidence="3">
    <original>Y</original>
    <variation>I</variation>
    <location>
        <position position="292"/>
    </location>
</feature>
<feature type="mutagenesis site" description="Complete loss of RNK activity, no effect on NMN adenylyltransferase activity." evidence="3">
    <original>D</original>
    <variation>C</variation>
    <variation>N</variation>
    <variation>S</variation>
    <location>
        <position position="304"/>
    </location>
</feature>
<feature type="mutagenesis site" description="Complete loss of RNK activity, no effect on NMN adenylyltransferase activity." evidence="3">
    <original>R</original>
    <variation>A</variation>
    <variation>C</variation>
    <variation>M</variation>
    <variation>N</variation>
    <location>
        <position position="352"/>
    </location>
</feature>
<feature type="strand" evidence="5">
    <location>
        <begin position="60"/>
        <end position="65"/>
    </location>
</feature>
<feature type="helix" evidence="5">
    <location>
        <begin position="72"/>
        <end position="82"/>
    </location>
</feature>
<feature type="strand" evidence="5">
    <location>
        <begin position="86"/>
        <end position="94"/>
    </location>
</feature>
<feature type="helix" evidence="5">
    <location>
        <begin position="96"/>
        <end position="105"/>
    </location>
</feature>
<feature type="helix" evidence="5">
    <location>
        <begin position="114"/>
        <end position="124"/>
    </location>
</feature>
<feature type="turn" evidence="5">
    <location>
        <begin position="127"/>
        <end position="131"/>
    </location>
</feature>
<feature type="strand" evidence="5">
    <location>
        <begin position="132"/>
        <end position="138"/>
    </location>
</feature>
<feature type="strand" evidence="5">
    <location>
        <begin position="140"/>
        <end position="142"/>
    </location>
</feature>
<feature type="helix" evidence="5">
    <location>
        <begin position="149"/>
        <end position="162"/>
    </location>
</feature>
<feature type="strand" evidence="5">
    <location>
        <begin position="168"/>
        <end position="171"/>
    </location>
</feature>
<feature type="helix" evidence="5">
    <location>
        <begin position="175"/>
        <end position="177"/>
    </location>
</feature>
<feature type="helix" evidence="5">
    <location>
        <begin position="178"/>
        <end position="184"/>
    </location>
</feature>
<feature type="strand" evidence="5">
    <location>
        <begin position="188"/>
        <end position="190"/>
    </location>
</feature>
<feature type="helix" evidence="5">
    <location>
        <begin position="203"/>
        <end position="208"/>
    </location>
</feature>
<feature type="helix" evidence="5">
    <location>
        <begin position="210"/>
        <end position="216"/>
    </location>
</feature>
<feature type="turn" evidence="5">
    <location>
        <begin position="219"/>
        <end position="221"/>
    </location>
</feature>
<feature type="helix" evidence="5">
    <location>
        <begin position="222"/>
        <end position="224"/>
    </location>
</feature>
<feature type="strand" evidence="5">
    <location>
        <begin position="227"/>
        <end position="232"/>
    </location>
</feature>
<feature type="helix" evidence="5">
    <location>
        <begin position="238"/>
        <end position="249"/>
    </location>
</feature>
<feature type="strand" evidence="5">
    <location>
        <begin position="253"/>
        <end position="255"/>
    </location>
</feature>
<feature type="helix" evidence="5">
    <location>
        <begin position="260"/>
        <end position="265"/>
    </location>
</feature>
<feature type="strand" evidence="5">
    <location>
        <begin position="266"/>
        <end position="269"/>
    </location>
</feature>
<feature type="turn" evidence="5">
    <location>
        <begin position="276"/>
        <end position="278"/>
    </location>
</feature>
<feature type="helix" evidence="5">
    <location>
        <begin position="279"/>
        <end position="296"/>
    </location>
</feature>
<feature type="strand" evidence="5">
    <location>
        <begin position="298"/>
        <end position="305"/>
    </location>
</feature>
<feature type="helix" evidence="5">
    <location>
        <begin position="307"/>
        <end position="318"/>
    </location>
</feature>
<feature type="helix" evidence="5">
    <location>
        <begin position="323"/>
        <end position="331"/>
    </location>
</feature>
<feature type="strand" evidence="5">
    <location>
        <begin position="335"/>
        <end position="341"/>
    </location>
</feature>
<feature type="helix" evidence="5">
    <location>
        <begin position="360"/>
        <end position="372"/>
    </location>
</feature>
<feature type="helix" evidence="5">
    <location>
        <begin position="373"/>
        <end position="375"/>
    </location>
</feature>
<feature type="strand" evidence="5">
    <location>
        <begin position="379"/>
        <end position="382"/>
    </location>
</feature>
<feature type="helix" evidence="5">
    <location>
        <begin position="386"/>
        <end position="400"/>
    </location>
</feature>
<organism>
    <name type="scientific">Haemophilus influenzae (strain ATCC 51907 / DSM 11121 / KW20 / Rd)</name>
    <dbReference type="NCBI Taxonomy" id="71421"/>
    <lineage>
        <taxon>Bacteria</taxon>
        <taxon>Pseudomonadati</taxon>
        <taxon>Pseudomonadota</taxon>
        <taxon>Gammaproteobacteria</taxon>
        <taxon>Pasteurellales</taxon>
        <taxon>Pasteurellaceae</taxon>
        <taxon>Haemophilus</taxon>
    </lineage>
</organism>